<organism>
    <name type="scientific">Gallus gallus</name>
    <name type="common">Chicken</name>
    <dbReference type="NCBI Taxonomy" id="9031"/>
    <lineage>
        <taxon>Eukaryota</taxon>
        <taxon>Metazoa</taxon>
        <taxon>Chordata</taxon>
        <taxon>Craniata</taxon>
        <taxon>Vertebrata</taxon>
        <taxon>Euteleostomi</taxon>
        <taxon>Archelosauria</taxon>
        <taxon>Archosauria</taxon>
        <taxon>Dinosauria</taxon>
        <taxon>Saurischia</taxon>
        <taxon>Theropoda</taxon>
        <taxon>Coelurosauria</taxon>
        <taxon>Aves</taxon>
        <taxon>Neognathae</taxon>
        <taxon>Galloanserae</taxon>
        <taxon>Galliformes</taxon>
        <taxon>Phasianidae</taxon>
        <taxon>Phasianinae</taxon>
        <taxon>Gallus</taxon>
    </lineage>
</organism>
<keyword id="KW-0130">Cell adhesion</keyword>
<keyword id="KW-0965">Cell junction</keyword>
<keyword id="KW-1003">Cell membrane</keyword>
<keyword id="KW-0966">Cell projection</keyword>
<keyword id="KW-0963">Cytoplasm</keyword>
<keyword id="KW-0206">Cytoskeleton</keyword>
<keyword id="KW-0217">Developmental protein</keyword>
<keyword id="KW-0221">Differentiation</keyword>
<keyword id="KW-0472">Membrane</keyword>
<keyword id="KW-0539">Nucleus</keyword>
<keyword id="KW-1185">Reference proteome</keyword>
<comment type="function">
    <text evidence="4">May function as a linker between cadherin adhesion receptors and the cytoskeleton to regulate cell-cell adhesion and differentiation in the nervous system.</text>
</comment>
<comment type="subunit">
    <text evidence="4">Interacts with CDH1 and CDH2.</text>
</comment>
<comment type="subcellular location">
    <subcellularLocation>
        <location evidence="4">Cell membrane</location>
        <topology evidence="6">Peripheral membrane protein</topology>
        <orientation evidence="6">Cytoplasmic side</orientation>
    </subcellularLocation>
    <subcellularLocation>
        <location evidence="2">Cytoplasm</location>
    </subcellularLocation>
    <subcellularLocation>
        <location evidence="2">Cytoplasm</location>
        <location evidence="2">Cytoskeleton</location>
    </subcellularLocation>
    <subcellularLocation>
        <location evidence="4">Cell junction</location>
        <location evidence="4">Adherens junction</location>
    </subcellularLocation>
    <subcellularLocation>
        <location evidence="6">Cell projection</location>
        <location evidence="6">Axon</location>
    </subcellularLocation>
    <subcellularLocation>
        <location evidence="1">Nucleus</location>
    </subcellularLocation>
</comment>
<comment type="tissue specificity">
    <text evidence="4">Mainly in the nervous system (at protein level).</text>
</comment>
<comment type="developmental stage">
    <text evidence="4">Expressed in the neural tube, dorsal root glanglia, spinal nerves and myotome at 4 dpc. Expressed in neuronal and glial cell populations as detected at 10 dpc (at protein level).</text>
</comment>
<comment type="similarity">
    <text evidence="5">Belongs to the vinculin/alpha-catenin family.</text>
</comment>
<proteinExistence type="evidence at protein level"/>
<feature type="chain" id="PRO_0000064265" description="Catenin alpha-2">
    <location>
        <begin position="1"/>
        <end position="906"/>
    </location>
</feature>
<feature type="region of interest" description="Disordered" evidence="3">
    <location>
        <begin position="866"/>
        <end position="892"/>
    </location>
</feature>
<feature type="compositionally biased region" description="Basic and acidic residues" evidence="3">
    <location>
        <begin position="866"/>
        <end position="880"/>
    </location>
</feature>
<feature type="compositionally biased region" description="Basic residues" evidence="3">
    <location>
        <begin position="881"/>
        <end position="891"/>
    </location>
</feature>
<gene>
    <name type="primary">CTNNA2</name>
</gene>
<accession>P30997</accession>
<protein>
    <recommendedName>
        <fullName>Catenin alpha-2</fullName>
    </recommendedName>
    <alternativeName>
        <fullName>Alpha N-catenin</fullName>
    </alternativeName>
    <alternativeName>
        <fullName>Neural alpha-catenin</fullName>
    </alternativeName>
</protein>
<dbReference type="EMBL" id="D11090">
    <property type="protein sequence ID" value="BAA01863.1"/>
    <property type="molecule type" value="mRNA"/>
</dbReference>
<dbReference type="PIR" id="A43000">
    <property type="entry name" value="A43000"/>
</dbReference>
<dbReference type="RefSeq" id="NP_990467.1">
    <property type="nucleotide sequence ID" value="NM_205136.1"/>
</dbReference>
<dbReference type="SMR" id="P30997"/>
<dbReference type="FunCoup" id="P30997">
    <property type="interactions" value="511"/>
</dbReference>
<dbReference type="STRING" id="9031.ENSGALP00000025681"/>
<dbReference type="PaxDb" id="9031-ENSGALP00000025681"/>
<dbReference type="GeneID" id="396035"/>
<dbReference type="KEGG" id="gga:396035"/>
<dbReference type="CTD" id="1496"/>
<dbReference type="VEuPathDB" id="HostDB:geneid_396035"/>
<dbReference type="eggNOG" id="KOG3681">
    <property type="taxonomic scope" value="Eukaryota"/>
</dbReference>
<dbReference type="HOGENOM" id="CLU_015314_0_0_1"/>
<dbReference type="InParanoid" id="P30997"/>
<dbReference type="OrthoDB" id="6376697at2759"/>
<dbReference type="PhylomeDB" id="P30997"/>
<dbReference type="PRO" id="PR:P30997"/>
<dbReference type="Proteomes" id="UP000000539">
    <property type="component" value="Unassembled WGS sequence"/>
</dbReference>
<dbReference type="GO" id="GO:0015629">
    <property type="term" value="C:actin cytoskeleton"/>
    <property type="evidence" value="ECO:0007669"/>
    <property type="project" value="InterPro"/>
</dbReference>
<dbReference type="GO" id="GO:0005912">
    <property type="term" value="C:adherens junction"/>
    <property type="evidence" value="ECO:0000314"/>
    <property type="project" value="UniProtKB"/>
</dbReference>
<dbReference type="GO" id="GO:0030424">
    <property type="term" value="C:axon"/>
    <property type="evidence" value="ECO:0000314"/>
    <property type="project" value="UniProtKB"/>
</dbReference>
<dbReference type="GO" id="GO:0016342">
    <property type="term" value="C:catenin complex"/>
    <property type="evidence" value="ECO:0000318"/>
    <property type="project" value="GO_Central"/>
</dbReference>
<dbReference type="GO" id="GO:0005737">
    <property type="term" value="C:cytoplasm"/>
    <property type="evidence" value="ECO:0000250"/>
    <property type="project" value="UniProtKB"/>
</dbReference>
<dbReference type="GO" id="GO:0005829">
    <property type="term" value="C:cytosol"/>
    <property type="evidence" value="ECO:0000314"/>
    <property type="project" value="AgBase"/>
</dbReference>
<dbReference type="GO" id="GO:0005634">
    <property type="term" value="C:nucleus"/>
    <property type="evidence" value="ECO:0007669"/>
    <property type="project" value="UniProtKB-SubCell"/>
</dbReference>
<dbReference type="GO" id="GO:0005886">
    <property type="term" value="C:plasma membrane"/>
    <property type="evidence" value="ECO:0000314"/>
    <property type="project" value="AgBase"/>
</dbReference>
<dbReference type="GO" id="GO:0051015">
    <property type="term" value="F:actin filament binding"/>
    <property type="evidence" value="ECO:0000318"/>
    <property type="project" value="GO_Central"/>
</dbReference>
<dbReference type="GO" id="GO:0008013">
    <property type="term" value="F:beta-catenin binding"/>
    <property type="evidence" value="ECO:0000318"/>
    <property type="project" value="GO_Central"/>
</dbReference>
<dbReference type="GO" id="GO:0045296">
    <property type="term" value="F:cadherin binding"/>
    <property type="evidence" value="ECO:0007669"/>
    <property type="project" value="InterPro"/>
</dbReference>
<dbReference type="GO" id="GO:0005198">
    <property type="term" value="F:structural molecule activity"/>
    <property type="evidence" value="ECO:0007669"/>
    <property type="project" value="InterPro"/>
</dbReference>
<dbReference type="GO" id="GO:0007409">
    <property type="term" value="P:axonogenesis"/>
    <property type="evidence" value="ECO:0000250"/>
    <property type="project" value="UniProtKB"/>
</dbReference>
<dbReference type="GO" id="GO:0048854">
    <property type="term" value="P:brain morphogenesis"/>
    <property type="evidence" value="ECO:0000250"/>
    <property type="project" value="UniProtKB"/>
</dbReference>
<dbReference type="GO" id="GO:0016477">
    <property type="term" value="P:cell migration"/>
    <property type="evidence" value="ECO:0000318"/>
    <property type="project" value="GO_Central"/>
</dbReference>
<dbReference type="GO" id="GO:0098609">
    <property type="term" value="P:cell-cell adhesion"/>
    <property type="evidence" value="ECO:0000314"/>
    <property type="project" value="UniProtKB"/>
</dbReference>
<dbReference type="GO" id="GO:0048813">
    <property type="term" value="P:dendrite morphogenesis"/>
    <property type="evidence" value="ECO:0000250"/>
    <property type="project" value="UniProtKB"/>
</dbReference>
<dbReference type="GO" id="GO:0030855">
    <property type="term" value="P:epithelial cell differentiation"/>
    <property type="evidence" value="ECO:0000314"/>
    <property type="project" value="UniProtKB"/>
</dbReference>
<dbReference type="GO" id="GO:0001755">
    <property type="term" value="P:neural crest cell migration"/>
    <property type="evidence" value="ECO:0000315"/>
    <property type="project" value="AgBase"/>
</dbReference>
<dbReference type="GO" id="GO:0008104">
    <property type="term" value="P:protein localization"/>
    <property type="evidence" value="ECO:0000315"/>
    <property type="project" value="AgBase"/>
</dbReference>
<dbReference type="GO" id="GO:0051823">
    <property type="term" value="P:regulation of synapse structural plasticity"/>
    <property type="evidence" value="ECO:0000250"/>
    <property type="project" value="UniProtKB"/>
</dbReference>
<dbReference type="GO" id="GO:0061561">
    <property type="term" value="P:trigeminal ganglion formation"/>
    <property type="evidence" value="ECO:0000315"/>
    <property type="project" value="AgBase"/>
</dbReference>
<dbReference type="FunFam" id="1.20.120.230:FF:000006">
    <property type="entry name" value="Catenin alpha 1"/>
    <property type="match status" value="1"/>
</dbReference>
<dbReference type="FunFam" id="1.20.120.230:FF:000007">
    <property type="entry name" value="Catenin alpha 1"/>
    <property type="match status" value="1"/>
</dbReference>
<dbReference type="FunFam" id="1.20.120.230:FF:000008">
    <property type="entry name" value="Catenin alpha 1"/>
    <property type="match status" value="1"/>
</dbReference>
<dbReference type="FunFam" id="1.20.120.230:FF:000011">
    <property type="entry name" value="Catenin alpha 1"/>
    <property type="match status" value="1"/>
</dbReference>
<dbReference type="Gene3D" id="6.10.250.2510">
    <property type="match status" value="1"/>
</dbReference>
<dbReference type="Gene3D" id="1.20.120.230">
    <property type="entry name" value="Alpha-catenin/vinculin-like"/>
    <property type="match status" value="5"/>
</dbReference>
<dbReference type="InterPro" id="IPR036723">
    <property type="entry name" value="Alpha-catenin/vinculin-like_sf"/>
</dbReference>
<dbReference type="InterPro" id="IPR001033">
    <property type="entry name" value="Alpha_catenin"/>
</dbReference>
<dbReference type="InterPro" id="IPR006077">
    <property type="entry name" value="Vinculin/catenin"/>
</dbReference>
<dbReference type="InterPro" id="IPR000633">
    <property type="entry name" value="Vinculin_CS"/>
</dbReference>
<dbReference type="PANTHER" id="PTHR18914">
    <property type="entry name" value="ALPHA CATENIN"/>
    <property type="match status" value="1"/>
</dbReference>
<dbReference type="PANTHER" id="PTHR18914:SF23">
    <property type="entry name" value="CATENIN ALPHA-2"/>
    <property type="match status" value="1"/>
</dbReference>
<dbReference type="Pfam" id="PF01044">
    <property type="entry name" value="Vinculin"/>
    <property type="match status" value="1"/>
</dbReference>
<dbReference type="PRINTS" id="PR00805">
    <property type="entry name" value="ALPHACATENIN"/>
</dbReference>
<dbReference type="SUPFAM" id="SSF47220">
    <property type="entry name" value="alpha-catenin/vinculin-like"/>
    <property type="match status" value="4"/>
</dbReference>
<dbReference type="PROSITE" id="PS00663">
    <property type="entry name" value="VINCULIN_1"/>
    <property type="match status" value="1"/>
</dbReference>
<evidence type="ECO:0000250" key="1">
    <source>
        <dbReference type="UniProtKB" id="P26232"/>
    </source>
</evidence>
<evidence type="ECO:0000250" key="2">
    <source>
        <dbReference type="UniProtKB" id="Q61301"/>
    </source>
</evidence>
<evidence type="ECO:0000256" key="3">
    <source>
        <dbReference type="SAM" id="MobiDB-lite"/>
    </source>
</evidence>
<evidence type="ECO:0000269" key="4">
    <source>
    </source>
</evidence>
<evidence type="ECO:0000305" key="5"/>
<evidence type="ECO:0000305" key="6">
    <source>
    </source>
</evidence>
<sequence>MTSATSPIILKWDPKSLEIRTLTVERLLEPLVTQVTTLVNTSNKGPSGKKKGRSKKAHVLAASVEQATQNFLEKGDQIAKESQDLKEELVAAVEDVRKQGETMRIASSEFADDPCSSVKRGTMVRAARALLSAVTRLLILADMADVMRLLSHLKIVEEALEAVKNATNEQDLANRFKEFGKEMVKLNYVAARRQQELKDPHCRDEMAAARGALKKNATMLYTASQAFLRHPDVAATRANRDYVFKQVQEAIAGISNAAQATSPTDENKGHTGIGELAAALNEFDNKIILDPMTFSEARFRPSLEERLESIISGAALMADSSCTRDDRRKRIVAECKRAVRQALQDLLSEYMNNTGRKEKGDPLNIAIDKMTKKTRDLRRQLRKAVMDHISDSFLETNVPLLVLIEAAKSGNEKEVKEYAQVFREHANKLVEVANLACSISNNEEGVKLVRMAATQIDSLCPQVINAALTLAARPQSKVAQDNMDVFKDQWEKQVRVLTEAVDDITSVDDFLSVSENHILEDVNKCVIALQEGDVDTLDRTAGAIRGRAARVIHIINAEMENYETGVYTEKVLEATKLLSETVMPRFAEQVEVAIEALSANVPQPFEENEFIDASRLVYDGVRDIRKAVLMIRTPEELEDDSDFEQEDYDVRSRTSVQTEDDQLIAGQSARAIMAQLPQEEKAKIAEQVEIFHQEKSKLDAEVAKWDDSGNDIIVLAKQMCMIMMEMTDFTRGKGPLKNTSDVINAAKKIAEAGSRMDKLARAVADQCPDSACKQDLLAYLQRIALYCHQLNICSKVKAEVQNLGGELIVSGLDSATSLIQAAKNLMNAVVLTVKASYVASTKYQKVYGTAAVNSPVVSWKMKAPEKKPLVKREKPEEYQTRVRRGSQKKHISPVQALSEFKAMDSF</sequence>
<reference key="1">
    <citation type="journal article" date="1992" name="Cell">
        <title>Identification of a neural alpha-catenin as a key regulator of cadherin function and multicellular organization.</title>
        <authorList>
            <person name="Hirano S."/>
            <person name="Kimoto N."/>
            <person name="Shimoyama Y."/>
            <person name="Hirohashi S."/>
            <person name="Takeichi M."/>
        </authorList>
    </citation>
    <scope>NUCLEOTIDE SEQUENCE [MRNA]</scope>
    <scope>FUNCTION</scope>
    <scope>INTERACTION WITH CDH1 AND CDH2</scope>
    <scope>SUBCELLULAR LOCATION</scope>
    <scope>TISSUE SPECIFICITY</scope>
    <scope>DEVELOPMENTAL STAGE</scope>
    <source>
        <tissue>Embryonic brain</tissue>
    </source>
</reference>
<name>CTNA2_CHICK</name>